<evidence type="ECO:0000305" key="1"/>
<organism>
    <name type="scientific">Human herpesvirus 6B (strain Z29)</name>
    <name type="common">HHV-6 variant B</name>
    <name type="synonym">Human B lymphotropic virus</name>
    <dbReference type="NCBI Taxonomy" id="36351"/>
    <lineage>
        <taxon>Viruses</taxon>
        <taxon>Duplodnaviria</taxon>
        <taxon>Heunggongvirae</taxon>
        <taxon>Peploviricota</taxon>
        <taxon>Herviviricetes</taxon>
        <taxon>Herpesvirales</taxon>
        <taxon>Orthoherpesviridae</taxon>
        <taxon>Betaherpesvirinae</taxon>
        <taxon>Roseolovirus</taxon>
        <taxon>Roseolovirus humanbeta6b</taxon>
        <taxon>Human herpesvirus 6B</taxon>
    </lineage>
</organism>
<keyword id="KW-1185">Reference proteome</keyword>
<proteinExistence type="inferred from homology"/>
<organismHost>
    <name type="scientific">Homo sapiens</name>
    <name type="common">Human</name>
    <dbReference type="NCBI Taxonomy" id="9606"/>
</organismHost>
<reference key="1">
    <citation type="journal article" date="1999" name="J. Virol.">
        <title>Human herpesvirus 6B genome sequence: coding content and comparison with human herpesvirus 6A.</title>
        <authorList>
            <person name="Dominguez G."/>
            <person name="Dambaugh T.R."/>
            <person name="Stamey F.R."/>
            <person name="Dewhurst S."/>
            <person name="Inoue N."/>
            <person name="Pellett P.E."/>
        </authorList>
    </citation>
    <scope>NUCLEOTIDE SEQUENCE [LARGE SCALE GENOMIC DNA]</scope>
</reference>
<protein>
    <recommendedName>
        <fullName>Protein U62</fullName>
    </recommendedName>
</protein>
<name>UL91_HHV6Z</name>
<sequence>MNSALNEIKDDFENCETKNDLFKIIDKISKNCNFIVEQVESLPRRVDSAAILFDNLAVEIFNDVIYRQNGDGVAAKIRQGNGQNIDT</sequence>
<comment type="similarity">
    <text evidence="1">Belongs to the herpesviridae UL91 family.</text>
</comment>
<dbReference type="EMBL" id="AF157706">
    <property type="protein sequence ID" value="AAD49663.1"/>
    <property type="molecule type" value="Genomic_DNA"/>
</dbReference>
<dbReference type="RefSeq" id="NP_050242.1">
    <property type="nucleotide sequence ID" value="NC_000898.1"/>
</dbReference>
<dbReference type="SMR" id="Q9QJ22"/>
<dbReference type="DNASU" id="1497062"/>
<dbReference type="GeneID" id="1497062"/>
<dbReference type="KEGG" id="vg:1497062"/>
<dbReference type="Proteomes" id="UP000006930">
    <property type="component" value="Segment"/>
</dbReference>
<dbReference type="InterPro" id="IPR035385">
    <property type="entry name" value="U62/UL91"/>
</dbReference>
<dbReference type="Pfam" id="PF17442">
    <property type="entry name" value="U62_UL91"/>
    <property type="match status" value="1"/>
</dbReference>
<gene>
    <name type="primary">U62</name>
</gene>
<accession>Q9QJ22</accession>
<feature type="chain" id="PRO_0000408441" description="Protein U62">
    <location>
        <begin position="1"/>
        <end position="87"/>
    </location>
</feature>